<accession>A6UE79</accession>
<sequence length="417" mass="44599">MSSAFDFEPQPRRASVAVDVGGVIVGGGAPVVVQSMTNTDTADIDATVAQVAALHKAGSELVRITVDRDESAAAVPKIRERLLRLGLDVPLVGDFHYIGHKLLADHPACAEALAKYRINPGNVGFKDKKDKQFAEIVEMAIRYDKPVRIGVNWGSLDQELLTRLMDANKANGFPLTAQQVTRETIVQSALLSAELAEELGLPRNRIILSAKVSGVQDLIAVYAMLSARSDHALHLGLTEAGMGTKGIVASSASLGILMQQGIGDTIRISLTPEPGGDRTREVQVAQELLQVMGFRQFIPVVAACPGCGRTTSTVFQELAQKIQEDIRSSMPVWREKYPGVEALKVAVMGCIVNGPGESKHADIGISLPGTGEMPAAPVFIDGHKAMTLRGPKIAEDFQLLVADYIEKRFGHGQAAAE</sequence>
<dbReference type="EC" id="1.17.7.3" evidence="1"/>
<dbReference type="EMBL" id="CP000738">
    <property type="protein sequence ID" value="ABR61959.1"/>
    <property type="molecule type" value="Genomic_DNA"/>
</dbReference>
<dbReference type="RefSeq" id="WP_012067340.1">
    <property type="nucleotide sequence ID" value="NC_009636.1"/>
</dbReference>
<dbReference type="RefSeq" id="YP_001328794.1">
    <property type="nucleotide sequence ID" value="NC_009636.1"/>
</dbReference>
<dbReference type="SMR" id="A6UE79"/>
<dbReference type="STRING" id="366394.Smed_3133"/>
<dbReference type="GeneID" id="61610718"/>
<dbReference type="KEGG" id="smd:Smed_3133"/>
<dbReference type="PATRIC" id="fig|366394.8.peg.6366"/>
<dbReference type="eggNOG" id="COG0821">
    <property type="taxonomic scope" value="Bacteria"/>
</dbReference>
<dbReference type="HOGENOM" id="CLU_042258_1_0_5"/>
<dbReference type="OrthoDB" id="9803214at2"/>
<dbReference type="UniPathway" id="UPA00056">
    <property type="reaction ID" value="UER00096"/>
</dbReference>
<dbReference type="Proteomes" id="UP000001108">
    <property type="component" value="Chromosome"/>
</dbReference>
<dbReference type="GO" id="GO:0051539">
    <property type="term" value="F:4 iron, 4 sulfur cluster binding"/>
    <property type="evidence" value="ECO:0007669"/>
    <property type="project" value="UniProtKB-UniRule"/>
</dbReference>
<dbReference type="GO" id="GO:0046429">
    <property type="term" value="F:4-hydroxy-3-methylbut-2-en-1-yl diphosphate synthase activity (ferredoxin)"/>
    <property type="evidence" value="ECO:0007669"/>
    <property type="project" value="UniProtKB-UniRule"/>
</dbReference>
<dbReference type="GO" id="GO:0141197">
    <property type="term" value="F:4-hydroxy-3-methylbut-2-enyl-diphosphate synthase activity (flavodoxin)"/>
    <property type="evidence" value="ECO:0007669"/>
    <property type="project" value="UniProtKB-EC"/>
</dbReference>
<dbReference type="GO" id="GO:0005506">
    <property type="term" value="F:iron ion binding"/>
    <property type="evidence" value="ECO:0007669"/>
    <property type="project" value="InterPro"/>
</dbReference>
<dbReference type="GO" id="GO:0019288">
    <property type="term" value="P:isopentenyl diphosphate biosynthetic process, methylerythritol 4-phosphate pathway"/>
    <property type="evidence" value="ECO:0007669"/>
    <property type="project" value="UniProtKB-UniRule"/>
</dbReference>
<dbReference type="GO" id="GO:0016114">
    <property type="term" value="P:terpenoid biosynthetic process"/>
    <property type="evidence" value="ECO:0007669"/>
    <property type="project" value="InterPro"/>
</dbReference>
<dbReference type="FunFam" id="3.30.413.10:FF:000012">
    <property type="entry name" value="4-hydroxy-3-methylbut-2-en-1-yl diphosphate synthase (flavodoxin)"/>
    <property type="match status" value="1"/>
</dbReference>
<dbReference type="Gene3D" id="3.20.20.20">
    <property type="entry name" value="Dihydropteroate synthase-like"/>
    <property type="match status" value="1"/>
</dbReference>
<dbReference type="Gene3D" id="3.30.413.10">
    <property type="entry name" value="Sulfite Reductase Hemoprotein, domain 1"/>
    <property type="match status" value="1"/>
</dbReference>
<dbReference type="HAMAP" id="MF_00159">
    <property type="entry name" value="IspG"/>
    <property type="match status" value="1"/>
</dbReference>
<dbReference type="InterPro" id="IPR011005">
    <property type="entry name" value="Dihydropteroate_synth-like_sf"/>
</dbReference>
<dbReference type="InterPro" id="IPR016425">
    <property type="entry name" value="IspG_bac"/>
</dbReference>
<dbReference type="InterPro" id="IPR004588">
    <property type="entry name" value="IspG_bac-typ"/>
</dbReference>
<dbReference type="InterPro" id="IPR045854">
    <property type="entry name" value="NO2/SO3_Rdtase_4Fe4S_sf"/>
</dbReference>
<dbReference type="NCBIfam" id="TIGR00612">
    <property type="entry name" value="ispG_gcpE"/>
    <property type="match status" value="1"/>
</dbReference>
<dbReference type="NCBIfam" id="NF001540">
    <property type="entry name" value="PRK00366.1"/>
    <property type="match status" value="1"/>
</dbReference>
<dbReference type="PANTHER" id="PTHR30454">
    <property type="entry name" value="4-HYDROXY-3-METHYLBUT-2-EN-1-YL DIPHOSPHATE SYNTHASE"/>
    <property type="match status" value="1"/>
</dbReference>
<dbReference type="PANTHER" id="PTHR30454:SF0">
    <property type="entry name" value="4-HYDROXY-3-METHYLBUT-2-EN-1-YL DIPHOSPHATE SYNTHASE (FERREDOXIN), CHLOROPLASTIC"/>
    <property type="match status" value="1"/>
</dbReference>
<dbReference type="Pfam" id="PF04551">
    <property type="entry name" value="GcpE"/>
    <property type="match status" value="1"/>
</dbReference>
<dbReference type="PIRSF" id="PIRSF004640">
    <property type="entry name" value="IspG"/>
    <property type="match status" value="1"/>
</dbReference>
<dbReference type="SUPFAM" id="SSF56014">
    <property type="entry name" value="Nitrite and sulphite reductase 4Fe-4S domain-like"/>
    <property type="match status" value="1"/>
</dbReference>
<proteinExistence type="inferred from homology"/>
<protein>
    <recommendedName>
        <fullName evidence="1">4-hydroxy-3-methylbut-2-en-1-yl diphosphate synthase (flavodoxin)</fullName>
        <ecNumber evidence="1">1.17.7.3</ecNumber>
    </recommendedName>
    <alternativeName>
        <fullName evidence="1">1-hydroxy-2-methyl-2-(E)-butenyl 4-diphosphate synthase</fullName>
    </alternativeName>
</protein>
<comment type="function">
    <text evidence="1">Converts 2C-methyl-D-erythritol 2,4-cyclodiphosphate (ME-2,4cPP) into 1-hydroxy-2-methyl-2-(E)-butenyl 4-diphosphate.</text>
</comment>
<comment type="catalytic activity">
    <reaction evidence="1">
        <text>(2E)-4-hydroxy-3-methylbut-2-enyl diphosphate + oxidized [flavodoxin] + H2O + 2 H(+) = 2-C-methyl-D-erythritol 2,4-cyclic diphosphate + reduced [flavodoxin]</text>
        <dbReference type="Rhea" id="RHEA:43604"/>
        <dbReference type="Rhea" id="RHEA-COMP:10622"/>
        <dbReference type="Rhea" id="RHEA-COMP:10623"/>
        <dbReference type="ChEBI" id="CHEBI:15377"/>
        <dbReference type="ChEBI" id="CHEBI:15378"/>
        <dbReference type="ChEBI" id="CHEBI:57618"/>
        <dbReference type="ChEBI" id="CHEBI:58210"/>
        <dbReference type="ChEBI" id="CHEBI:58483"/>
        <dbReference type="ChEBI" id="CHEBI:128753"/>
        <dbReference type="EC" id="1.17.7.3"/>
    </reaction>
</comment>
<comment type="cofactor">
    <cofactor evidence="1">
        <name>[4Fe-4S] cluster</name>
        <dbReference type="ChEBI" id="CHEBI:49883"/>
    </cofactor>
    <text evidence="1">Binds 1 [4Fe-4S] cluster.</text>
</comment>
<comment type="pathway">
    <text evidence="1">Isoprenoid biosynthesis; isopentenyl diphosphate biosynthesis via DXP pathway; isopentenyl diphosphate from 1-deoxy-D-xylulose 5-phosphate: step 5/6.</text>
</comment>
<comment type="similarity">
    <text evidence="1">Belongs to the IspG family.</text>
</comment>
<feature type="chain" id="PRO_1000011530" description="4-hydroxy-3-methylbut-2-en-1-yl diphosphate synthase (flavodoxin)">
    <location>
        <begin position="1"/>
        <end position="417"/>
    </location>
</feature>
<feature type="binding site" evidence="1">
    <location>
        <position position="304"/>
    </location>
    <ligand>
        <name>[4Fe-4S] cluster</name>
        <dbReference type="ChEBI" id="CHEBI:49883"/>
    </ligand>
</feature>
<feature type="binding site" evidence="1">
    <location>
        <position position="307"/>
    </location>
    <ligand>
        <name>[4Fe-4S] cluster</name>
        <dbReference type="ChEBI" id="CHEBI:49883"/>
    </ligand>
</feature>
<feature type="binding site" evidence="1">
    <location>
        <position position="350"/>
    </location>
    <ligand>
        <name>[4Fe-4S] cluster</name>
        <dbReference type="ChEBI" id="CHEBI:49883"/>
    </ligand>
</feature>
<feature type="binding site" evidence="1">
    <location>
        <position position="357"/>
    </location>
    <ligand>
        <name>[4Fe-4S] cluster</name>
        <dbReference type="ChEBI" id="CHEBI:49883"/>
    </ligand>
</feature>
<keyword id="KW-0004">4Fe-4S</keyword>
<keyword id="KW-0408">Iron</keyword>
<keyword id="KW-0411">Iron-sulfur</keyword>
<keyword id="KW-0414">Isoprene biosynthesis</keyword>
<keyword id="KW-0479">Metal-binding</keyword>
<keyword id="KW-0560">Oxidoreductase</keyword>
<gene>
    <name evidence="1" type="primary">ispG</name>
    <name type="ordered locus">Smed_3133</name>
</gene>
<evidence type="ECO:0000255" key="1">
    <source>
        <dbReference type="HAMAP-Rule" id="MF_00159"/>
    </source>
</evidence>
<name>ISPG_SINMW</name>
<reference key="1">
    <citation type="submission" date="2007-06" db="EMBL/GenBank/DDBJ databases">
        <title>Complete sequence of Sinorhizobium medicae WSM419 chromosome.</title>
        <authorList>
            <consortium name="US DOE Joint Genome Institute"/>
            <person name="Copeland A."/>
            <person name="Lucas S."/>
            <person name="Lapidus A."/>
            <person name="Barry K."/>
            <person name="Glavina del Rio T."/>
            <person name="Dalin E."/>
            <person name="Tice H."/>
            <person name="Pitluck S."/>
            <person name="Chain P."/>
            <person name="Malfatti S."/>
            <person name="Shin M."/>
            <person name="Vergez L."/>
            <person name="Schmutz J."/>
            <person name="Larimer F."/>
            <person name="Land M."/>
            <person name="Hauser L."/>
            <person name="Kyrpides N."/>
            <person name="Mikhailova N."/>
            <person name="Reeve W.G."/>
            <person name="Richardson P."/>
        </authorList>
    </citation>
    <scope>NUCLEOTIDE SEQUENCE [LARGE SCALE GENOMIC DNA]</scope>
    <source>
        <strain>WSM419</strain>
    </source>
</reference>
<organism>
    <name type="scientific">Sinorhizobium medicae (strain WSM419)</name>
    <name type="common">Ensifer medicae</name>
    <dbReference type="NCBI Taxonomy" id="366394"/>
    <lineage>
        <taxon>Bacteria</taxon>
        <taxon>Pseudomonadati</taxon>
        <taxon>Pseudomonadota</taxon>
        <taxon>Alphaproteobacteria</taxon>
        <taxon>Hyphomicrobiales</taxon>
        <taxon>Rhizobiaceae</taxon>
        <taxon>Sinorhizobium/Ensifer group</taxon>
        <taxon>Sinorhizobium</taxon>
    </lineage>
</organism>